<organism>
    <name type="scientific">Canis lupus familiaris</name>
    <name type="common">Dog</name>
    <name type="synonym">Canis familiaris</name>
    <dbReference type="NCBI Taxonomy" id="9615"/>
    <lineage>
        <taxon>Eukaryota</taxon>
        <taxon>Metazoa</taxon>
        <taxon>Chordata</taxon>
        <taxon>Craniata</taxon>
        <taxon>Vertebrata</taxon>
        <taxon>Euteleostomi</taxon>
        <taxon>Mammalia</taxon>
        <taxon>Eutheria</taxon>
        <taxon>Laurasiatheria</taxon>
        <taxon>Carnivora</taxon>
        <taxon>Caniformia</taxon>
        <taxon>Canidae</taxon>
        <taxon>Canis</taxon>
    </lineage>
</organism>
<sequence>MPSLGTMCSLLLFSVLWVDLAMAGSSFLSPEHQKLQQRKESKKPPAKLQPRALEGSLGPEDTSQVEEAEDELEIRFNAPFDVGIKLSGPQYHQHGQALGKFLQEVLWEDTNEALADE</sequence>
<reference key="1">
    <citation type="submission" date="2001-01" db="EMBL/GenBank/DDBJ databases">
        <title>Identification of cDNA encoding MTLRP/ghrelin precursor from dog fundus.</title>
        <authorList>
            <person name="Tomasetto C."/>
            <person name="Wendling C."/>
            <person name="Rio M.-C."/>
            <person name="Poitras P."/>
        </authorList>
    </citation>
    <scope>NUCLEOTIDE SEQUENCE [MRNA] (ISOFORMS 1 AND 2)</scope>
    <source>
        <tissue>Gastric fundus</tissue>
    </source>
</reference>
<reference key="2">
    <citation type="submission" date="2001-04" db="EMBL/GenBank/DDBJ databases">
        <title>Dog ghrelin.</title>
        <authorList>
            <person name="Doi K."/>
            <person name="Kojima M."/>
            <person name="Hosoda H."/>
            <person name="Kaiya H."/>
            <person name="Matsuo H."/>
            <person name="Kangawa K."/>
        </authorList>
    </citation>
    <scope>NUCLEOTIDE SEQUENCE [MRNA] (ISOFORM 1)</scope>
    <source>
        <tissue>Stomach</tissue>
    </source>
</reference>
<evidence type="ECO:0000250" key="1"/>
<evidence type="ECO:0000250" key="2">
    <source>
        <dbReference type="UniProtKB" id="Q9EQX0"/>
    </source>
</evidence>
<evidence type="ECO:0000256" key="3">
    <source>
        <dbReference type="SAM" id="MobiDB-lite"/>
    </source>
</evidence>
<evidence type="ECO:0000303" key="4">
    <source ref="1"/>
</evidence>
<evidence type="ECO:0000305" key="5"/>
<accession>Q9BEF8</accession>
<accession>Q9BEF7</accession>
<proteinExistence type="inferred from homology"/>
<comment type="function">
    <molecule>Ghrelin</molecule>
    <text evidence="1">Ghrelin is the ligand for growth hormone secretagogue receptor type 1 (GHSR). Induces the release of growth hormone from the pituitary. Has an appetite-stimulating effect, induces adiposity and stimulates gastric acid secretion. Involved in growth regulation (By similarity).</text>
</comment>
<comment type="function">
    <molecule>Obestatin</molecule>
    <text evidence="1">Obestatin may be the ligand for GPR39. May have an appetite-reducing effect resulting in decreased food intake. May reduce gastric emptying activity and jejunal motility (By similarity).</text>
</comment>
<comment type="subcellular location">
    <subcellularLocation>
        <location>Secreted</location>
    </subcellularLocation>
</comment>
<comment type="alternative products">
    <event type="alternative splicing"/>
    <isoform>
        <id>Q9BEF8-1</id>
        <name>1</name>
        <name>Ghrelin</name>
        <sequence type="displayed"/>
    </isoform>
    <isoform>
        <id>Q9BEF8-2</id>
        <name>2</name>
        <name>des-Gln14-ghrelin</name>
        <sequence type="described" ref="VSP_003244"/>
    </isoform>
</comment>
<comment type="PTM">
    <text evidence="1 2">O-octanoylated by GOAT/MBOAT4 (By similarity). O-octanoylation is essential for ghrelin activity.</text>
</comment>
<comment type="PTM">
    <text evidence="1">Amidation of Leu-98 is essential for obestatin activity.</text>
</comment>
<comment type="similarity">
    <text evidence="5">Belongs to the motilin family.</text>
</comment>
<comment type="online information" name="Protein Spotlight">
    <link uri="https://www.proteinspotlight.org/back_issues/066"/>
    <text>Gut feelings - Issue 66 of January 2006</text>
</comment>
<dbReference type="EMBL" id="AJ298295">
    <property type="protein sequence ID" value="CAC29155.1"/>
    <property type="molecule type" value="mRNA"/>
</dbReference>
<dbReference type="EMBL" id="AJ298296">
    <property type="protein sequence ID" value="CAC29156.1"/>
    <property type="molecule type" value="mRNA"/>
</dbReference>
<dbReference type="EMBL" id="AB060700">
    <property type="protein sequence ID" value="BAC75929.1"/>
    <property type="molecule type" value="mRNA"/>
</dbReference>
<dbReference type="RefSeq" id="NP_001003052.1">
    <molecule id="Q9BEF8-1"/>
    <property type="nucleotide sequence ID" value="NM_001003052.2"/>
</dbReference>
<dbReference type="RefSeq" id="XP_005632067.1">
    <property type="nucleotide sequence ID" value="XM_005632010.2"/>
</dbReference>
<dbReference type="RefSeq" id="XP_038282281.1">
    <molecule id="Q9BEF8-1"/>
    <property type="nucleotide sequence ID" value="XM_038426353.1"/>
</dbReference>
<dbReference type="RefSeq" id="XP_038282282.1">
    <molecule id="Q9BEF8-2"/>
    <property type="nucleotide sequence ID" value="XM_038426354.1"/>
</dbReference>
<dbReference type="SMR" id="Q9BEF8"/>
<dbReference type="FunCoup" id="Q9BEF8">
    <property type="interactions" value="34"/>
</dbReference>
<dbReference type="STRING" id="9615.ENSCAFP00000007641"/>
<dbReference type="PaxDb" id="9612-ENSCAFP00000007641"/>
<dbReference type="Ensembl" id="ENSCAFT00000008248.5">
    <molecule id="Q9BEF8-1"/>
    <property type="protein sequence ID" value="ENSCAFP00000007641.3"/>
    <property type="gene ID" value="ENSCAFG00000005129.5"/>
</dbReference>
<dbReference type="Ensembl" id="ENSCAFT00030009815.1">
    <molecule id="Q9BEF8-1"/>
    <property type="protein sequence ID" value="ENSCAFP00030008590.1"/>
    <property type="gene ID" value="ENSCAFG00030005337.1"/>
</dbReference>
<dbReference type="Ensembl" id="ENSCAFT00040043692.1">
    <molecule id="Q9BEF8-1"/>
    <property type="protein sequence ID" value="ENSCAFP00040038121.1"/>
    <property type="gene ID" value="ENSCAFG00040023482.1"/>
</dbReference>
<dbReference type="Ensembl" id="ENSCAFT00845013921.1">
    <molecule id="Q9BEF8-1"/>
    <property type="protein sequence ID" value="ENSCAFP00845010788.1"/>
    <property type="gene ID" value="ENSCAFG00845007901.1"/>
</dbReference>
<dbReference type="GeneID" id="403587"/>
<dbReference type="KEGG" id="cfa:403587"/>
<dbReference type="CTD" id="51738"/>
<dbReference type="VEuPathDB" id="HostDB:ENSCAFG00845007901"/>
<dbReference type="eggNOG" id="ENOG502SFY3">
    <property type="taxonomic scope" value="Eukaryota"/>
</dbReference>
<dbReference type="GeneTree" id="ENSGT00390000004064"/>
<dbReference type="HOGENOM" id="CLU_168380_0_0_1"/>
<dbReference type="InParanoid" id="Q9BEF8"/>
<dbReference type="OMA" id="QYQQYGR"/>
<dbReference type="OrthoDB" id="9896247at2759"/>
<dbReference type="TreeFam" id="TF336219"/>
<dbReference type="Reactome" id="R-CFA-416476">
    <property type="pathway name" value="G alpha (q) signalling events"/>
</dbReference>
<dbReference type="Reactome" id="R-CFA-422085">
    <property type="pathway name" value="Synthesis, secretion, and deacylation of Ghrelin"/>
</dbReference>
<dbReference type="Proteomes" id="UP000002254">
    <property type="component" value="Chromosome 20"/>
</dbReference>
<dbReference type="Proteomes" id="UP000694429">
    <property type="component" value="Chromosome 20"/>
</dbReference>
<dbReference type="Proteomes" id="UP000694542">
    <property type="component" value="Chromosome 20"/>
</dbReference>
<dbReference type="Proteomes" id="UP000805418">
    <property type="component" value="Chromosome 20"/>
</dbReference>
<dbReference type="Bgee" id="ENSCAFG00000005129">
    <property type="expression patterns" value="Expressed in stomach and 19 other cell types or tissues"/>
</dbReference>
<dbReference type="GO" id="GO:0030424">
    <property type="term" value="C:axon"/>
    <property type="evidence" value="ECO:0000250"/>
    <property type="project" value="UniProtKB"/>
</dbReference>
<dbReference type="GO" id="GO:0005576">
    <property type="term" value="C:extracellular region"/>
    <property type="evidence" value="ECO:0000250"/>
    <property type="project" value="UniProtKB"/>
</dbReference>
<dbReference type="GO" id="GO:0005615">
    <property type="term" value="C:extracellular space"/>
    <property type="evidence" value="ECO:0000250"/>
    <property type="project" value="UniProtKB"/>
</dbReference>
<dbReference type="GO" id="GO:0099013">
    <property type="term" value="C:neuronal dense core vesicle lumen"/>
    <property type="evidence" value="ECO:0007669"/>
    <property type="project" value="Ensembl"/>
</dbReference>
<dbReference type="GO" id="GO:0098794">
    <property type="term" value="C:postsynapse"/>
    <property type="evidence" value="ECO:0007669"/>
    <property type="project" value="GOC"/>
</dbReference>
<dbReference type="GO" id="GO:0031768">
    <property type="term" value="F:ghrelin receptor binding"/>
    <property type="evidence" value="ECO:0000250"/>
    <property type="project" value="UniProtKB"/>
</dbReference>
<dbReference type="GO" id="GO:0016608">
    <property type="term" value="F:growth hormone-releasing hormone activity"/>
    <property type="evidence" value="ECO:0000250"/>
    <property type="project" value="UniProtKB"/>
</dbReference>
<dbReference type="GO" id="GO:0005179">
    <property type="term" value="F:hormone activity"/>
    <property type="evidence" value="ECO:0000250"/>
    <property type="project" value="UniProtKB"/>
</dbReference>
<dbReference type="GO" id="GO:0030296">
    <property type="term" value="F:protein tyrosine kinase activator activity"/>
    <property type="evidence" value="ECO:0000250"/>
    <property type="project" value="UniProtKB"/>
</dbReference>
<dbReference type="GO" id="GO:0008154">
    <property type="term" value="P:actin polymerization or depolymerization"/>
    <property type="evidence" value="ECO:0000250"/>
    <property type="project" value="UniProtKB"/>
</dbReference>
<dbReference type="GO" id="GO:0046697">
    <property type="term" value="P:decidualization"/>
    <property type="evidence" value="ECO:0000250"/>
    <property type="project" value="UniProtKB"/>
</dbReference>
<dbReference type="GO" id="GO:0016358">
    <property type="term" value="P:dendrite development"/>
    <property type="evidence" value="ECO:0000250"/>
    <property type="project" value="UniProtKB"/>
</dbReference>
<dbReference type="GO" id="GO:0060079">
    <property type="term" value="P:excitatory postsynaptic potential"/>
    <property type="evidence" value="ECO:0007669"/>
    <property type="project" value="Ensembl"/>
</dbReference>
<dbReference type="GO" id="GO:0001696">
    <property type="term" value="P:gastric acid secretion"/>
    <property type="evidence" value="ECO:0000318"/>
    <property type="project" value="GO_Central"/>
</dbReference>
<dbReference type="GO" id="GO:0043066">
    <property type="term" value="P:negative regulation of apoptotic process"/>
    <property type="evidence" value="ECO:0000250"/>
    <property type="project" value="UniProtKB"/>
</dbReference>
<dbReference type="GO" id="GO:0042322">
    <property type="term" value="P:negative regulation of circadian sleep/wake cycle, REM sleep"/>
    <property type="evidence" value="ECO:0007669"/>
    <property type="project" value="Ensembl"/>
</dbReference>
<dbReference type="GO" id="GO:0001937">
    <property type="term" value="P:negative regulation of endothelial cell proliferation"/>
    <property type="evidence" value="ECO:0000250"/>
    <property type="project" value="UniProtKB"/>
</dbReference>
<dbReference type="GO" id="GO:0050728">
    <property type="term" value="P:negative regulation of inflammatory response"/>
    <property type="evidence" value="ECO:0000250"/>
    <property type="project" value="UniProtKB"/>
</dbReference>
<dbReference type="GO" id="GO:0046676">
    <property type="term" value="P:negative regulation of insulin secretion"/>
    <property type="evidence" value="ECO:0000250"/>
    <property type="project" value="UniProtKB"/>
</dbReference>
<dbReference type="GO" id="GO:0032691">
    <property type="term" value="P:negative regulation of interleukin-1 beta production"/>
    <property type="evidence" value="ECO:0000250"/>
    <property type="project" value="UniProtKB"/>
</dbReference>
<dbReference type="GO" id="GO:0032715">
    <property type="term" value="P:negative regulation of interleukin-6 production"/>
    <property type="evidence" value="ECO:0000250"/>
    <property type="project" value="UniProtKB"/>
</dbReference>
<dbReference type="GO" id="GO:0040013">
    <property type="term" value="P:negative regulation of locomotion"/>
    <property type="evidence" value="ECO:0007669"/>
    <property type="project" value="Ensembl"/>
</dbReference>
<dbReference type="GO" id="GO:0032720">
    <property type="term" value="P:negative regulation of tumor necrosis factor production"/>
    <property type="evidence" value="ECO:0000250"/>
    <property type="project" value="UniProtKB"/>
</dbReference>
<dbReference type="GO" id="GO:0032100">
    <property type="term" value="P:positive regulation of appetite"/>
    <property type="evidence" value="ECO:0007669"/>
    <property type="project" value="Ensembl"/>
</dbReference>
<dbReference type="GO" id="GO:0046010">
    <property type="term" value="P:positive regulation of circadian sleep/wake cycle, non-REM sleep"/>
    <property type="evidence" value="ECO:0007669"/>
    <property type="project" value="Ensembl"/>
</dbReference>
<dbReference type="GO" id="GO:0120162">
    <property type="term" value="P:positive regulation of cold-induced thermogenesis"/>
    <property type="evidence" value="ECO:0007669"/>
    <property type="project" value="Ensembl"/>
</dbReference>
<dbReference type="GO" id="GO:0051461">
    <property type="term" value="P:positive regulation of corticotropin secretion"/>
    <property type="evidence" value="ECO:0007669"/>
    <property type="project" value="Ensembl"/>
</dbReference>
<dbReference type="GO" id="GO:0051464">
    <property type="term" value="P:positive regulation of cortisol secretion"/>
    <property type="evidence" value="ECO:0007669"/>
    <property type="project" value="Ensembl"/>
</dbReference>
<dbReference type="GO" id="GO:0007204">
    <property type="term" value="P:positive regulation of cytosolic calcium ion concentration"/>
    <property type="evidence" value="ECO:0000250"/>
    <property type="project" value="UniProtKB"/>
</dbReference>
<dbReference type="GO" id="GO:0060124">
    <property type="term" value="P:positive regulation of growth hormone secretion"/>
    <property type="evidence" value="ECO:0000318"/>
    <property type="project" value="GO_Central"/>
</dbReference>
<dbReference type="GO" id="GO:0032024">
    <property type="term" value="P:positive regulation of insulin secretion"/>
    <property type="evidence" value="ECO:0000250"/>
    <property type="project" value="UniProtKB"/>
</dbReference>
<dbReference type="GO" id="GO:0043410">
    <property type="term" value="P:positive regulation of MAPK cascade"/>
    <property type="evidence" value="ECO:0000250"/>
    <property type="project" value="UniProtKB"/>
</dbReference>
<dbReference type="GO" id="GO:0032097">
    <property type="term" value="P:positive regulation of response to food"/>
    <property type="evidence" value="ECO:0000250"/>
    <property type="project" value="UniProtKB"/>
</dbReference>
<dbReference type="GO" id="GO:0051965">
    <property type="term" value="P:positive regulation of synapse assembly"/>
    <property type="evidence" value="ECO:0000250"/>
    <property type="project" value="UniProtKB"/>
</dbReference>
<dbReference type="GO" id="GO:0042127">
    <property type="term" value="P:regulation of cell population proliferation"/>
    <property type="evidence" value="ECO:0000250"/>
    <property type="project" value="UniProtKB"/>
</dbReference>
<dbReference type="GO" id="GO:0032095">
    <property type="term" value="P:regulation of response to food"/>
    <property type="evidence" value="ECO:0000250"/>
    <property type="project" value="UniProtKB"/>
</dbReference>
<dbReference type="GO" id="GO:0043627">
    <property type="term" value="P:response to estrogen"/>
    <property type="evidence" value="ECO:0000250"/>
    <property type="project" value="UniProtKB"/>
</dbReference>
<dbReference type="GO" id="GO:0009725">
    <property type="term" value="P:response to hormone"/>
    <property type="evidence" value="ECO:0000250"/>
    <property type="project" value="UniProtKB"/>
</dbReference>
<dbReference type="GO" id="GO:0007416">
    <property type="term" value="P:synapse assembly"/>
    <property type="evidence" value="ECO:0007669"/>
    <property type="project" value="Ensembl"/>
</dbReference>
<dbReference type="InterPro" id="IPR006737">
    <property type="entry name" value="Motilin_assoc"/>
</dbReference>
<dbReference type="InterPro" id="IPR006738">
    <property type="entry name" value="Motilin_ghrelin"/>
</dbReference>
<dbReference type="InterPro" id="IPR005441">
    <property type="entry name" value="Preproghrelin"/>
</dbReference>
<dbReference type="PANTHER" id="PTHR14122:SF1">
    <property type="entry name" value="APPETITE-REGULATING HORMONE"/>
    <property type="match status" value="1"/>
</dbReference>
<dbReference type="PANTHER" id="PTHR14122">
    <property type="entry name" value="GHRELIN PRECURSOR"/>
    <property type="match status" value="1"/>
</dbReference>
<dbReference type="Pfam" id="PF04643">
    <property type="entry name" value="Motilin_assoc"/>
    <property type="match status" value="1"/>
</dbReference>
<dbReference type="Pfam" id="PF04644">
    <property type="entry name" value="Motilin_ghrelin"/>
    <property type="match status" value="1"/>
</dbReference>
<dbReference type="PRINTS" id="PR01624">
    <property type="entry name" value="GHRELIN"/>
</dbReference>
<gene>
    <name type="primary">GHRL</name>
    <name type="synonym">MTLRP</name>
</gene>
<feature type="signal peptide" evidence="1">
    <location>
        <begin position="1"/>
        <end position="23"/>
    </location>
</feature>
<feature type="peptide" id="PRO_0000019196" description="Ghrelin" evidence="1">
    <location>
        <begin position="24"/>
        <end position="51"/>
    </location>
</feature>
<feature type="propeptide" id="PRO_0000019197" description="Removed in mature form" evidence="1">
    <location>
        <begin position="52"/>
        <end position="75"/>
    </location>
</feature>
<feature type="peptide" id="PRO_0000045134" description="Obestatin" evidence="1">
    <location>
        <begin position="76"/>
        <end position="98"/>
    </location>
</feature>
<feature type="propeptide" id="PRO_0000045135" description="Removed in mature form" evidence="1">
    <location>
        <begin position="99"/>
        <end position="117"/>
    </location>
</feature>
<feature type="region of interest" description="Disordered" evidence="3">
    <location>
        <begin position="30"/>
        <end position="68"/>
    </location>
</feature>
<feature type="compositionally biased region" description="Basic and acidic residues" evidence="3">
    <location>
        <begin position="31"/>
        <end position="43"/>
    </location>
</feature>
<feature type="modified residue" description="Leucine amide" evidence="1">
    <location>
        <position position="98"/>
    </location>
</feature>
<feature type="lipid moiety-binding region" description="O-decanoyl serine; alternate" evidence="2">
    <location>
        <position position="26"/>
    </location>
</feature>
<feature type="lipid moiety-binding region" description="O-hexanoyl serine; alternate" evidence="2">
    <location>
        <position position="26"/>
    </location>
</feature>
<feature type="lipid moiety-binding region" description="O-octanoyl serine; alternate" evidence="2">
    <location>
        <position position="26"/>
    </location>
</feature>
<feature type="splice variant" id="VSP_003244" description="In isoform 2." evidence="4">
    <location>
        <position position="37"/>
    </location>
</feature>
<keyword id="KW-0025">Alternative splicing</keyword>
<keyword id="KW-0027">Amidation</keyword>
<keyword id="KW-0372">Hormone</keyword>
<keyword id="KW-0449">Lipoprotein</keyword>
<keyword id="KW-1185">Reference proteome</keyword>
<keyword id="KW-0964">Secreted</keyword>
<keyword id="KW-0732">Signal</keyword>
<protein>
    <recommendedName>
        <fullName>Appetite-regulating hormone</fullName>
    </recommendedName>
    <alternativeName>
        <fullName>Growth hormone secretagogue</fullName>
    </alternativeName>
    <alternativeName>
        <fullName>Growth hormone-releasing peptide</fullName>
    </alternativeName>
    <alternativeName>
        <fullName>Motilin-related peptide</fullName>
    </alternativeName>
    <component>
        <recommendedName>
            <fullName>Ghrelin</fullName>
        </recommendedName>
    </component>
    <component>
        <recommendedName>
            <fullName>Obestatin</fullName>
        </recommendedName>
    </component>
</protein>
<name>GHRL_CANLF</name>